<evidence type="ECO:0000255" key="1">
    <source>
        <dbReference type="HAMAP-Rule" id="MF_00120"/>
    </source>
</evidence>
<reference key="1">
    <citation type="journal article" date="2007" name="PLoS ONE">
        <title>Analysis of the neurotoxin complex genes in Clostridium botulinum A1-A4 and B1 strains: BoNT/A3, /Ba4 and /B1 clusters are located within plasmids.</title>
        <authorList>
            <person name="Smith T.J."/>
            <person name="Hill K.K."/>
            <person name="Foley B.T."/>
            <person name="Detter J.C."/>
            <person name="Munk A.C."/>
            <person name="Bruce D.C."/>
            <person name="Doggett N.A."/>
            <person name="Smith L.A."/>
            <person name="Marks J.D."/>
            <person name="Xie G."/>
            <person name="Brettin T.S."/>
        </authorList>
    </citation>
    <scope>NUCLEOTIDE SEQUENCE [LARGE SCALE GENOMIC DNA]</scope>
    <source>
        <strain>Okra / Type B1</strain>
    </source>
</reference>
<dbReference type="EC" id="6.3.5.7" evidence="1"/>
<dbReference type="EMBL" id="CP000939">
    <property type="protein sequence ID" value="ACA46910.1"/>
    <property type="molecule type" value="Genomic_DNA"/>
</dbReference>
<dbReference type="RefSeq" id="WP_003400639.1">
    <property type="nucleotide sequence ID" value="NC_010516.1"/>
</dbReference>
<dbReference type="SMR" id="B1INF7"/>
<dbReference type="KEGG" id="cbb:CLD_1256"/>
<dbReference type="HOGENOM" id="CLU_009600_0_3_9"/>
<dbReference type="Proteomes" id="UP000008541">
    <property type="component" value="Chromosome"/>
</dbReference>
<dbReference type="GO" id="GO:0030956">
    <property type="term" value="C:glutamyl-tRNA(Gln) amidotransferase complex"/>
    <property type="evidence" value="ECO:0007669"/>
    <property type="project" value="InterPro"/>
</dbReference>
<dbReference type="GO" id="GO:0005524">
    <property type="term" value="F:ATP binding"/>
    <property type="evidence" value="ECO:0007669"/>
    <property type="project" value="UniProtKB-KW"/>
</dbReference>
<dbReference type="GO" id="GO:0050567">
    <property type="term" value="F:glutaminyl-tRNA synthase (glutamine-hydrolyzing) activity"/>
    <property type="evidence" value="ECO:0007669"/>
    <property type="project" value="UniProtKB-UniRule"/>
</dbReference>
<dbReference type="GO" id="GO:0006412">
    <property type="term" value="P:translation"/>
    <property type="evidence" value="ECO:0007669"/>
    <property type="project" value="UniProtKB-UniRule"/>
</dbReference>
<dbReference type="Gene3D" id="3.90.1300.10">
    <property type="entry name" value="Amidase signature (AS) domain"/>
    <property type="match status" value="1"/>
</dbReference>
<dbReference type="HAMAP" id="MF_00120">
    <property type="entry name" value="GatA"/>
    <property type="match status" value="1"/>
</dbReference>
<dbReference type="InterPro" id="IPR000120">
    <property type="entry name" value="Amidase"/>
</dbReference>
<dbReference type="InterPro" id="IPR020556">
    <property type="entry name" value="Amidase_CS"/>
</dbReference>
<dbReference type="InterPro" id="IPR023631">
    <property type="entry name" value="Amidase_dom"/>
</dbReference>
<dbReference type="InterPro" id="IPR036928">
    <property type="entry name" value="AS_sf"/>
</dbReference>
<dbReference type="InterPro" id="IPR004412">
    <property type="entry name" value="GatA"/>
</dbReference>
<dbReference type="NCBIfam" id="TIGR00132">
    <property type="entry name" value="gatA"/>
    <property type="match status" value="1"/>
</dbReference>
<dbReference type="PANTHER" id="PTHR11895:SF151">
    <property type="entry name" value="GLUTAMYL-TRNA(GLN) AMIDOTRANSFERASE SUBUNIT A"/>
    <property type="match status" value="1"/>
</dbReference>
<dbReference type="PANTHER" id="PTHR11895">
    <property type="entry name" value="TRANSAMIDASE"/>
    <property type="match status" value="1"/>
</dbReference>
<dbReference type="Pfam" id="PF01425">
    <property type="entry name" value="Amidase"/>
    <property type="match status" value="1"/>
</dbReference>
<dbReference type="SUPFAM" id="SSF75304">
    <property type="entry name" value="Amidase signature (AS) enzymes"/>
    <property type="match status" value="1"/>
</dbReference>
<dbReference type="PROSITE" id="PS00571">
    <property type="entry name" value="AMIDASES"/>
    <property type="match status" value="1"/>
</dbReference>
<protein>
    <recommendedName>
        <fullName evidence="1">Glutamyl-tRNA(Gln) amidotransferase subunit A</fullName>
        <shortName evidence="1">Glu-ADT subunit A</shortName>
        <ecNumber evidence="1">6.3.5.7</ecNumber>
    </recommendedName>
</protein>
<gene>
    <name evidence="1" type="primary">gatA</name>
    <name type="ordered locus">CLD_1256</name>
</gene>
<proteinExistence type="inferred from homology"/>
<name>GATA_CLOBK</name>
<accession>B1INF7</accession>
<sequence length="485" mass="53224">MDLTKLTAHELKDMLSNKEVKAEEITKAFLDRINLVDNKLGAYLYVSEEEAIKKAKEIDVKIEKNEELKALSGIPIGIKDNINVKGMQNTCASKILEGYTSPYDAHVTEKIKQEEGIILGKLNMDEFAMGSSTENSAFKLAKNPWDLERVPGGSSGGSAVAVAGSEATLSLGTDTGGSVRQPASFCGVVGLKPTYGRISRSGVVAFGSTLDQVGPMGKDVEDCALLTSVIAGLDKKDFTTVDKEVPDYKKSLTKDIKGKRIGIPKEFFGDGLDKNIRKSVEEAIKVLEANGAEVKPCSLPLMDYALSAYYIISSAEASSNLARFDGIRYGYRSKNFKDAQDIYLKSRSEGFGDEVKRRIMLGTYVLSAGYYDAYYKKALKVRKLIKDDFQRVFKDFDAIVSPTSPTTAFKVGEKKDDVMSMYLSDIYTVPISVAGVPAISLPCGMVDGLPVGLQIISDYFKEDVLFNLAYSYEQSVDFYKMRADF</sequence>
<comment type="function">
    <text evidence="1">Allows the formation of correctly charged Gln-tRNA(Gln) through the transamidation of misacylated Glu-tRNA(Gln) in organisms which lack glutaminyl-tRNA synthetase. The reaction takes place in the presence of glutamine and ATP through an activated gamma-phospho-Glu-tRNA(Gln).</text>
</comment>
<comment type="catalytic activity">
    <reaction evidence="1">
        <text>L-glutamyl-tRNA(Gln) + L-glutamine + ATP + H2O = L-glutaminyl-tRNA(Gln) + L-glutamate + ADP + phosphate + H(+)</text>
        <dbReference type="Rhea" id="RHEA:17521"/>
        <dbReference type="Rhea" id="RHEA-COMP:9681"/>
        <dbReference type="Rhea" id="RHEA-COMP:9684"/>
        <dbReference type="ChEBI" id="CHEBI:15377"/>
        <dbReference type="ChEBI" id="CHEBI:15378"/>
        <dbReference type="ChEBI" id="CHEBI:29985"/>
        <dbReference type="ChEBI" id="CHEBI:30616"/>
        <dbReference type="ChEBI" id="CHEBI:43474"/>
        <dbReference type="ChEBI" id="CHEBI:58359"/>
        <dbReference type="ChEBI" id="CHEBI:78520"/>
        <dbReference type="ChEBI" id="CHEBI:78521"/>
        <dbReference type="ChEBI" id="CHEBI:456216"/>
        <dbReference type="EC" id="6.3.5.7"/>
    </reaction>
</comment>
<comment type="subunit">
    <text evidence="1">Heterotrimer of A, B and C subunits.</text>
</comment>
<comment type="similarity">
    <text evidence="1">Belongs to the amidase family. GatA subfamily.</text>
</comment>
<organism>
    <name type="scientific">Clostridium botulinum (strain Okra / Type B1)</name>
    <dbReference type="NCBI Taxonomy" id="498213"/>
    <lineage>
        <taxon>Bacteria</taxon>
        <taxon>Bacillati</taxon>
        <taxon>Bacillota</taxon>
        <taxon>Clostridia</taxon>
        <taxon>Eubacteriales</taxon>
        <taxon>Clostridiaceae</taxon>
        <taxon>Clostridium</taxon>
    </lineage>
</organism>
<feature type="chain" id="PRO_1000095125" description="Glutamyl-tRNA(Gln) amidotransferase subunit A">
    <location>
        <begin position="1"/>
        <end position="485"/>
    </location>
</feature>
<feature type="active site" description="Charge relay system" evidence="1">
    <location>
        <position position="79"/>
    </location>
</feature>
<feature type="active site" description="Charge relay system" evidence="1">
    <location>
        <position position="154"/>
    </location>
</feature>
<feature type="active site" description="Acyl-ester intermediate" evidence="1">
    <location>
        <position position="178"/>
    </location>
</feature>
<keyword id="KW-0067">ATP-binding</keyword>
<keyword id="KW-0436">Ligase</keyword>
<keyword id="KW-0547">Nucleotide-binding</keyword>
<keyword id="KW-0648">Protein biosynthesis</keyword>